<accession>Q1JQ92</accession>
<proteinExistence type="evidence at transcript level"/>
<sequence>MVRFKHRYLLCEVVSDDPRCRLTLEDRVLGTLVRDTIARVHGTFGAAACSIGFAVRYLNAYTGIVLLRCRKEFYRLVWSALPFITSLENKGHRYPCFLNTLHVGGTIRTCQKFLIQYNRRQLLILLQNCTDEGEREAIQKSVTKSCLLEEESAGEELSDSGGEETAEPME</sequence>
<dbReference type="EMBL" id="BC116153">
    <property type="protein sequence ID" value="AAI16154.1"/>
    <property type="molecule type" value="mRNA"/>
</dbReference>
<dbReference type="RefSeq" id="NP_001068780.1">
    <property type="nucleotide sequence ID" value="NM_001075312.2"/>
</dbReference>
<dbReference type="SMR" id="Q1JQ92"/>
<dbReference type="FunCoup" id="Q1JQ92">
    <property type="interactions" value="1217"/>
</dbReference>
<dbReference type="STRING" id="9913.ENSBTAP00000068266"/>
<dbReference type="PaxDb" id="9913-ENSBTAP00000007083"/>
<dbReference type="GeneID" id="507410"/>
<dbReference type="KEGG" id="bta:507410"/>
<dbReference type="CTD" id="51367"/>
<dbReference type="eggNOG" id="KOG4639">
    <property type="taxonomic scope" value="Eukaryota"/>
</dbReference>
<dbReference type="InParanoid" id="Q1JQ92"/>
<dbReference type="OrthoDB" id="24745at2759"/>
<dbReference type="Proteomes" id="UP000009136">
    <property type="component" value="Unplaced"/>
</dbReference>
<dbReference type="GO" id="GO:0030681">
    <property type="term" value="C:multimeric ribonuclease P complex"/>
    <property type="evidence" value="ECO:0000250"/>
    <property type="project" value="UniProtKB"/>
</dbReference>
<dbReference type="GO" id="GO:0005730">
    <property type="term" value="C:nucleolus"/>
    <property type="evidence" value="ECO:0000250"/>
    <property type="project" value="UniProtKB"/>
</dbReference>
<dbReference type="GO" id="GO:0000172">
    <property type="term" value="C:ribonuclease MRP complex"/>
    <property type="evidence" value="ECO:0000318"/>
    <property type="project" value="GO_Central"/>
</dbReference>
<dbReference type="GO" id="GO:0004526">
    <property type="term" value="F:ribonuclease P activity"/>
    <property type="evidence" value="ECO:0007669"/>
    <property type="project" value="UniProtKB-EC"/>
</dbReference>
<dbReference type="GO" id="GO:0033204">
    <property type="term" value="F:ribonuclease P RNA binding"/>
    <property type="evidence" value="ECO:0000250"/>
    <property type="project" value="UniProtKB"/>
</dbReference>
<dbReference type="GO" id="GO:0006364">
    <property type="term" value="P:rRNA processing"/>
    <property type="evidence" value="ECO:0007669"/>
    <property type="project" value="UniProtKB-KW"/>
</dbReference>
<dbReference type="GO" id="GO:0001682">
    <property type="term" value="P:tRNA 5'-leader removal"/>
    <property type="evidence" value="ECO:0000250"/>
    <property type="project" value="UniProtKB"/>
</dbReference>
<dbReference type="FunFam" id="3.30.70.3250:FF:000001">
    <property type="entry name" value="Ribonuclease P/MRP protein subunit POP5"/>
    <property type="match status" value="1"/>
</dbReference>
<dbReference type="Gene3D" id="3.30.70.3250">
    <property type="entry name" value="Ribonuclease P, Pop5 subunit"/>
    <property type="match status" value="1"/>
</dbReference>
<dbReference type="InterPro" id="IPR002759">
    <property type="entry name" value="Pop5/Rpp14/Rnp2-like"/>
</dbReference>
<dbReference type="InterPro" id="IPR016819">
    <property type="entry name" value="RNase_P/MRP_POP5"/>
</dbReference>
<dbReference type="InterPro" id="IPR038085">
    <property type="entry name" value="Rnp2-like_sf"/>
</dbReference>
<dbReference type="PANTHER" id="PTHR48414">
    <property type="entry name" value="POP5 HOMOLOG, RIBONUCLEASE P_MRP SUBUNIT"/>
    <property type="match status" value="1"/>
</dbReference>
<dbReference type="PANTHER" id="PTHR48414:SF1">
    <property type="entry name" value="POP5 HOMOLOG, RIBONUCLEASE P_MRP SUBUNIT"/>
    <property type="match status" value="1"/>
</dbReference>
<dbReference type="Pfam" id="PF01900">
    <property type="entry name" value="RNase_P_Rpp14"/>
    <property type="match status" value="1"/>
</dbReference>
<dbReference type="PIRSF" id="PIRSF023803">
    <property type="entry name" value="Ribonuclease_P_prd"/>
    <property type="match status" value="1"/>
</dbReference>
<dbReference type="SUPFAM" id="SSF160350">
    <property type="entry name" value="Rnp2-like"/>
    <property type="match status" value="1"/>
</dbReference>
<feature type="chain" id="PRO_0000327379" description="Ribonuclease P/MRP protein subunit POP5">
    <location>
        <begin position="1"/>
        <end position="170"/>
    </location>
</feature>
<feature type="region of interest" description="Disordered" evidence="3">
    <location>
        <begin position="149"/>
        <end position="170"/>
    </location>
</feature>
<feature type="modified residue" description="Phosphoserine" evidence="2">
    <location>
        <position position="158"/>
    </location>
</feature>
<feature type="modified residue" description="Phosphoserine" evidence="2">
    <location>
        <position position="160"/>
    </location>
</feature>
<evidence type="ECO:0000250" key="1">
    <source>
        <dbReference type="UniProtKB" id="Q969H6"/>
    </source>
</evidence>
<evidence type="ECO:0000250" key="2">
    <source>
        <dbReference type="UniProtKB" id="Q9DB28"/>
    </source>
</evidence>
<evidence type="ECO:0000256" key="3">
    <source>
        <dbReference type="SAM" id="MobiDB-lite"/>
    </source>
</evidence>
<evidence type="ECO:0000305" key="4"/>
<gene>
    <name type="primary">POP5</name>
</gene>
<reference key="1">
    <citation type="submission" date="2006-05" db="EMBL/GenBank/DDBJ databases">
        <authorList>
            <consortium name="NIH - Mammalian Gene Collection (MGC) project"/>
        </authorList>
    </citation>
    <scope>NUCLEOTIDE SEQUENCE [LARGE SCALE MRNA]</scope>
    <source>
        <strain>Hereford</strain>
        <tissue>Fetal cerebellum</tissue>
    </source>
</reference>
<name>POP5_BOVIN</name>
<organism>
    <name type="scientific">Bos taurus</name>
    <name type="common">Bovine</name>
    <dbReference type="NCBI Taxonomy" id="9913"/>
    <lineage>
        <taxon>Eukaryota</taxon>
        <taxon>Metazoa</taxon>
        <taxon>Chordata</taxon>
        <taxon>Craniata</taxon>
        <taxon>Vertebrata</taxon>
        <taxon>Euteleostomi</taxon>
        <taxon>Mammalia</taxon>
        <taxon>Eutheria</taxon>
        <taxon>Laurasiatheria</taxon>
        <taxon>Artiodactyla</taxon>
        <taxon>Ruminantia</taxon>
        <taxon>Pecora</taxon>
        <taxon>Bovidae</taxon>
        <taxon>Bovinae</taxon>
        <taxon>Bos</taxon>
    </lineage>
</organism>
<protein>
    <recommendedName>
        <fullName>Ribonuclease P/MRP protein subunit POP5</fullName>
    </recommendedName>
</protein>
<comment type="function">
    <text evidence="1">Component of ribonuclease P, a protein complex that generates mature tRNA molecules by cleaving their 5'-ends. Also a component of the MRP ribonuclease complex, which cleaves pre-rRNA sequences.</text>
</comment>
<comment type="subunit">
    <text evidence="1">Component of nuclear RNase P and RNase MRP ribonucleoproteins. RNase P consists of a catalytic RNA moiety and 10 different protein chains; POP1, POP4, POP5, POP7, RPP14, RPP21, RPP25, RPP30, RPP38 and RPP40. Within the RNase P complex, POP1, POP7 and RPP25 form the 'finger' subcomplex, POP5, RPP14, RPP40 and homodimeric RPP30 form the 'palm' subcomplex, and RPP21, POP4 and RPP38 form the 'wrist' subcomplex. All subunits of the RNase P complex interact with the catalytic RNA. Several subunits of RNase P are also part of the RNase MRP complex. RNase MRP consists of a catalytic RNA moiety and about 8 protein subunits; POP1, POP7, RPP25, RPP30, RPP38, RPP40 and possibly also POP4 and POP5.</text>
</comment>
<comment type="subcellular location">
    <subcellularLocation>
        <location evidence="1">Nucleus</location>
        <location evidence="1">Nucleolus</location>
    </subcellularLocation>
</comment>
<comment type="miscellaneous">
    <text>The last C-terminal 19 amino acids are not required for complex association and RNase activity.</text>
</comment>
<comment type="similarity">
    <text evidence="4">Belongs to the eukaryotic/archaeal RNase P protein component 2 family.</text>
</comment>
<keyword id="KW-0539">Nucleus</keyword>
<keyword id="KW-0597">Phosphoprotein</keyword>
<keyword id="KW-1185">Reference proteome</keyword>
<keyword id="KW-0698">rRNA processing</keyword>
<keyword id="KW-0819">tRNA processing</keyword>